<protein>
    <recommendedName>
        <fullName>UPF0213 protein SAS0445</fullName>
    </recommendedName>
</protein>
<gene>
    <name type="ordered locus">SAS0445</name>
</gene>
<accession>Q6GC00</accession>
<evidence type="ECO:0000255" key="1">
    <source>
        <dbReference type="PROSITE-ProRule" id="PRU00977"/>
    </source>
</evidence>
<evidence type="ECO:0000305" key="2"/>
<organism>
    <name type="scientific">Staphylococcus aureus (strain MSSA476)</name>
    <dbReference type="NCBI Taxonomy" id="282459"/>
    <lineage>
        <taxon>Bacteria</taxon>
        <taxon>Bacillati</taxon>
        <taxon>Bacillota</taxon>
        <taxon>Bacilli</taxon>
        <taxon>Bacillales</taxon>
        <taxon>Staphylococcaceae</taxon>
        <taxon>Staphylococcus</taxon>
    </lineage>
</organism>
<reference key="1">
    <citation type="journal article" date="2004" name="Proc. Natl. Acad. Sci. U.S.A.">
        <title>Complete genomes of two clinical Staphylococcus aureus strains: evidence for the rapid evolution of virulence and drug resistance.</title>
        <authorList>
            <person name="Holden M.T.G."/>
            <person name="Feil E.J."/>
            <person name="Lindsay J.A."/>
            <person name="Peacock S.J."/>
            <person name="Day N.P.J."/>
            <person name="Enright M.C."/>
            <person name="Foster T.J."/>
            <person name="Moore C.E."/>
            <person name="Hurst L."/>
            <person name="Atkin R."/>
            <person name="Barron A."/>
            <person name="Bason N."/>
            <person name="Bentley S.D."/>
            <person name="Chillingworth C."/>
            <person name="Chillingworth T."/>
            <person name="Churcher C."/>
            <person name="Clark L."/>
            <person name="Corton C."/>
            <person name="Cronin A."/>
            <person name="Doggett J."/>
            <person name="Dowd L."/>
            <person name="Feltwell T."/>
            <person name="Hance Z."/>
            <person name="Harris B."/>
            <person name="Hauser H."/>
            <person name="Holroyd S."/>
            <person name="Jagels K."/>
            <person name="James K.D."/>
            <person name="Lennard N."/>
            <person name="Line A."/>
            <person name="Mayes R."/>
            <person name="Moule S."/>
            <person name="Mungall K."/>
            <person name="Ormond D."/>
            <person name="Quail M.A."/>
            <person name="Rabbinowitsch E."/>
            <person name="Rutherford K.M."/>
            <person name="Sanders M."/>
            <person name="Sharp S."/>
            <person name="Simmonds M."/>
            <person name="Stevens K."/>
            <person name="Whitehead S."/>
            <person name="Barrell B.G."/>
            <person name="Spratt B.G."/>
            <person name="Parkhill J."/>
        </authorList>
    </citation>
    <scope>NUCLEOTIDE SEQUENCE [LARGE SCALE GENOMIC DNA]</scope>
    <source>
        <strain>MSSA476</strain>
    </source>
</reference>
<dbReference type="EMBL" id="BX571857">
    <property type="protein sequence ID" value="CAG42220.1"/>
    <property type="molecule type" value="Genomic_DNA"/>
</dbReference>
<dbReference type="RefSeq" id="WP_000377064.1">
    <property type="nucleotide sequence ID" value="NC_002953.3"/>
</dbReference>
<dbReference type="SMR" id="Q6GC00"/>
<dbReference type="KEGG" id="sas:SAS0445"/>
<dbReference type="HOGENOM" id="CLU_135650_0_3_9"/>
<dbReference type="CDD" id="cd10456">
    <property type="entry name" value="GIY-YIG_UPF0213"/>
    <property type="match status" value="1"/>
</dbReference>
<dbReference type="Gene3D" id="3.40.1440.10">
    <property type="entry name" value="GIY-YIG endonuclease"/>
    <property type="match status" value="1"/>
</dbReference>
<dbReference type="InterPro" id="IPR000305">
    <property type="entry name" value="GIY-YIG_endonuc"/>
</dbReference>
<dbReference type="InterPro" id="IPR035901">
    <property type="entry name" value="GIY-YIG_endonuc_sf"/>
</dbReference>
<dbReference type="InterPro" id="IPR050190">
    <property type="entry name" value="UPF0213_domain"/>
</dbReference>
<dbReference type="PANTHER" id="PTHR34477">
    <property type="entry name" value="UPF0213 PROTEIN YHBQ"/>
    <property type="match status" value="1"/>
</dbReference>
<dbReference type="PANTHER" id="PTHR34477:SF1">
    <property type="entry name" value="UPF0213 PROTEIN YHBQ"/>
    <property type="match status" value="1"/>
</dbReference>
<dbReference type="Pfam" id="PF01541">
    <property type="entry name" value="GIY-YIG"/>
    <property type="match status" value="1"/>
</dbReference>
<dbReference type="SMART" id="SM00465">
    <property type="entry name" value="GIYc"/>
    <property type="match status" value="1"/>
</dbReference>
<dbReference type="SUPFAM" id="SSF82771">
    <property type="entry name" value="GIY-YIG endonuclease"/>
    <property type="match status" value="1"/>
</dbReference>
<dbReference type="PROSITE" id="PS50164">
    <property type="entry name" value="GIY_YIG"/>
    <property type="match status" value="1"/>
</dbReference>
<proteinExistence type="inferred from homology"/>
<sequence>MDSHFVYIVKCSDGSLYTGYAKDVNARVEKHNRGQGAKYTKVRRPVHLVYQEMYETKSEALKREYEIKTYTRQKKLRLIKER</sequence>
<comment type="similarity">
    <text evidence="2">Belongs to the UPF0213 family.</text>
</comment>
<name>Y445_STAAS</name>
<feature type="chain" id="PRO_0000161385" description="UPF0213 protein SAS0445">
    <location>
        <begin position="1"/>
        <end position="82"/>
    </location>
</feature>
<feature type="domain" description="GIY-YIG" evidence="1">
    <location>
        <begin position="2"/>
        <end position="77"/>
    </location>
</feature>